<dbReference type="EC" id="5.3.1.6" evidence="1"/>
<dbReference type="EMBL" id="AE000516">
    <property type="protein sequence ID" value="AAK46840.1"/>
    <property type="status" value="ALT_INIT"/>
    <property type="molecule type" value="Genomic_DNA"/>
</dbReference>
<dbReference type="SMR" id="P9WKD6"/>
<dbReference type="KEGG" id="mtc:MT2540"/>
<dbReference type="PATRIC" id="fig|83331.31.peg.2741"/>
<dbReference type="HOGENOM" id="CLU_091396_4_0_11"/>
<dbReference type="UniPathway" id="UPA00115">
    <property type="reaction ID" value="UER00412"/>
</dbReference>
<dbReference type="Proteomes" id="UP000001020">
    <property type="component" value="Chromosome"/>
</dbReference>
<dbReference type="GO" id="GO:0004751">
    <property type="term" value="F:ribose-5-phosphate isomerase activity"/>
    <property type="evidence" value="ECO:0000250"/>
    <property type="project" value="UniProtKB"/>
</dbReference>
<dbReference type="GO" id="GO:0019316">
    <property type="term" value="P:D-allose catabolic process"/>
    <property type="evidence" value="ECO:0007669"/>
    <property type="project" value="TreeGrafter"/>
</dbReference>
<dbReference type="GO" id="GO:0009052">
    <property type="term" value="P:pentose-phosphate shunt, non-oxidative branch"/>
    <property type="evidence" value="ECO:0000250"/>
    <property type="project" value="UniProtKB"/>
</dbReference>
<dbReference type="FunFam" id="3.40.1400.10:FF:000002">
    <property type="entry name" value="Ribose-5-phosphate isomerase B"/>
    <property type="match status" value="1"/>
</dbReference>
<dbReference type="Gene3D" id="3.40.1400.10">
    <property type="entry name" value="Sugar-phosphate isomerase, RpiB/LacA/LacB"/>
    <property type="match status" value="1"/>
</dbReference>
<dbReference type="InterPro" id="IPR011860">
    <property type="entry name" value="Rib-5-P_Isoase_Actino"/>
</dbReference>
<dbReference type="InterPro" id="IPR003500">
    <property type="entry name" value="RpiB_LacA_LacB"/>
</dbReference>
<dbReference type="InterPro" id="IPR036569">
    <property type="entry name" value="RpiB_LacA_LacB_sf"/>
</dbReference>
<dbReference type="NCBIfam" id="NF004051">
    <property type="entry name" value="PRK05571.1"/>
    <property type="match status" value="1"/>
</dbReference>
<dbReference type="NCBIfam" id="TIGR02133">
    <property type="entry name" value="RPI_actino"/>
    <property type="match status" value="1"/>
</dbReference>
<dbReference type="NCBIfam" id="TIGR00689">
    <property type="entry name" value="rpiB_lacA_lacB"/>
    <property type="match status" value="1"/>
</dbReference>
<dbReference type="PANTHER" id="PTHR30345:SF0">
    <property type="entry name" value="DNA DAMAGE-REPAIR_TOLERATION PROTEIN DRT102"/>
    <property type="match status" value="1"/>
</dbReference>
<dbReference type="PANTHER" id="PTHR30345">
    <property type="entry name" value="RIBOSE-5-PHOSPHATE ISOMERASE B"/>
    <property type="match status" value="1"/>
</dbReference>
<dbReference type="Pfam" id="PF02502">
    <property type="entry name" value="LacAB_rpiB"/>
    <property type="match status" value="1"/>
</dbReference>
<dbReference type="PIRSF" id="PIRSF005384">
    <property type="entry name" value="RpiB_LacA_B"/>
    <property type="match status" value="1"/>
</dbReference>
<dbReference type="SUPFAM" id="SSF89623">
    <property type="entry name" value="Ribose/Galactose isomerase RpiB/AlsB"/>
    <property type="match status" value="1"/>
</dbReference>
<organism>
    <name type="scientific">Mycobacterium tuberculosis (strain CDC 1551 / Oshkosh)</name>
    <dbReference type="NCBI Taxonomy" id="83331"/>
    <lineage>
        <taxon>Bacteria</taxon>
        <taxon>Bacillati</taxon>
        <taxon>Actinomycetota</taxon>
        <taxon>Actinomycetes</taxon>
        <taxon>Mycobacteriales</taxon>
        <taxon>Mycobacteriaceae</taxon>
        <taxon>Mycobacterium</taxon>
        <taxon>Mycobacterium tuberculosis complex</taxon>
    </lineage>
</organism>
<comment type="function">
    <text evidence="1">Catalyzes the interconversion of ribulose-5-P and ribose-5-P.</text>
</comment>
<comment type="catalytic activity">
    <reaction evidence="1">
        <text>aldehydo-D-ribose 5-phosphate = D-ribulose 5-phosphate</text>
        <dbReference type="Rhea" id="RHEA:14657"/>
        <dbReference type="ChEBI" id="CHEBI:58121"/>
        <dbReference type="ChEBI" id="CHEBI:58273"/>
        <dbReference type="EC" id="5.3.1.6"/>
    </reaction>
</comment>
<comment type="pathway">
    <text evidence="1">Carbohydrate degradation; pentose phosphate pathway; D-ribose 5-phosphate from D-ribulose 5-phosphate (non-oxidative stage): step 1/1.</text>
</comment>
<comment type="subunit">
    <text evidence="1">Homodimer.</text>
</comment>
<comment type="miscellaneous">
    <text evidence="1">In mycobacterial enzymes, the usual proton acceptor is not a cysteine, but is remplaced by a glutamate.</text>
</comment>
<comment type="similarity">
    <text evidence="2">Belongs to the LacAB/RpiB family.</text>
</comment>
<comment type="sequence caution" evidence="2">
    <conflict type="erroneous initiation">
        <sequence resource="EMBL-CDS" id="AAK46840"/>
    </conflict>
    <text>Truncated N-terminus.</text>
</comment>
<sequence length="162" mass="17278">MSGMRVYLGADHAGYELKQRIIEHLKQTGHEPIDCGALRYDADDDYPAFCIAAATRTVADPGSLGIVLGGSGNGEQIAANKVPGARCALAWSVQTAALAREHNNAQLIGIGGRMHTVAEALAIVDAFVTTPWSKAQRHQRRIDILAEYERTHEAPPVPGAPA</sequence>
<proteinExistence type="inferred from homology"/>
<name>RPIB_MYCTO</name>
<reference key="1">
    <citation type="journal article" date="2002" name="J. Bacteriol.">
        <title>Whole-genome comparison of Mycobacterium tuberculosis clinical and laboratory strains.</title>
        <authorList>
            <person name="Fleischmann R.D."/>
            <person name="Alland D."/>
            <person name="Eisen J.A."/>
            <person name="Carpenter L."/>
            <person name="White O."/>
            <person name="Peterson J.D."/>
            <person name="DeBoy R.T."/>
            <person name="Dodson R.J."/>
            <person name="Gwinn M.L."/>
            <person name="Haft D.H."/>
            <person name="Hickey E.K."/>
            <person name="Kolonay J.F."/>
            <person name="Nelson W.C."/>
            <person name="Umayam L.A."/>
            <person name="Ermolaeva M.D."/>
            <person name="Salzberg S.L."/>
            <person name="Delcher A."/>
            <person name="Utterback T.R."/>
            <person name="Weidman J.F."/>
            <person name="Khouri H.M."/>
            <person name="Gill J."/>
            <person name="Mikula A."/>
            <person name="Bishai W."/>
            <person name="Jacobs W.R. Jr."/>
            <person name="Venter J.C."/>
            <person name="Fraser C.M."/>
        </authorList>
    </citation>
    <scope>NUCLEOTIDE SEQUENCE [LARGE SCALE GENOMIC DNA]</scope>
    <source>
        <strain>CDC 1551 / Oshkosh</strain>
    </source>
</reference>
<keyword id="KW-0119">Carbohydrate metabolism</keyword>
<keyword id="KW-0413">Isomerase</keyword>
<keyword id="KW-1185">Reference proteome</keyword>
<protein>
    <recommendedName>
        <fullName evidence="1">Ribose-5-phosphate isomerase B</fullName>
        <ecNumber evidence="1">5.3.1.6</ecNumber>
    </recommendedName>
    <alternativeName>
        <fullName evidence="1">Phosphoriboisomerase B</fullName>
    </alternativeName>
</protein>
<evidence type="ECO:0000250" key="1">
    <source>
        <dbReference type="UniProtKB" id="P9WKD7"/>
    </source>
</evidence>
<evidence type="ECO:0000305" key="2"/>
<accession>P9WKD6</accession>
<accession>L0TCF4</accession>
<accession>Q79FD7</accession>
<accession>Q7D737</accession>
<gene>
    <name evidence="1" type="primary">rpiB</name>
    <name type="ordered locus">MT2540</name>
</gene>
<feature type="chain" id="PRO_0000427672" description="Ribose-5-phosphate isomerase B">
    <location>
        <begin position="1"/>
        <end position="162"/>
    </location>
</feature>
<feature type="active site" description="Proton acceptor" evidence="1">
    <location>
        <position position="75"/>
    </location>
</feature>
<feature type="active site" description="Proton donor" evidence="1">
    <location>
        <position position="102"/>
    </location>
</feature>
<feature type="binding site" evidence="1">
    <location>
        <begin position="11"/>
        <end position="12"/>
    </location>
    <ligand>
        <name>D-ribulose 5-phosphate</name>
        <dbReference type="ChEBI" id="CHEBI:58121"/>
    </ligand>
</feature>
<feature type="binding site" evidence="1">
    <location>
        <begin position="70"/>
        <end position="74"/>
    </location>
    <ligand>
        <name>D-ribulose 5-phosphate</name>
        <dbReference type="ChEBI" id="CHEBI:58121"/>
    </ligand>
</feature>
<feature type="binding site" evidence="1">
    <location>
        <position position="103"/>
    </location>
    <ligand>
        <name>D-ribulose 5-phosphate</name>
        <dbReference type="ChEBI" id="CHEBI:58121"/>
    </ligand>
</feature>
<feature type="binding site" evidence="1">
    <location>
        <position position="113"/>
    </location>
    <ligand>
        <name>D-ribulose 5-phosphate</name>
        <dbReference type="ChEBI" id="CHEBI:58121"/>
    </ligand>
</feature>
<feature type="binding site" evidence="1">
    <location>
        <position position="137"/>
    </location>
    <ligand>
        <name>D-ribulose 5-phosphate</name>
        <dbReference type="ChEBI" id="CHEBI:58121"/>
    </ligand>
</feature>
<feature type="binding site" evidence="1">
    <location>
        <position position="141"/>
    </location>
    <ligand>
        <name>D-ribulose 5-phosphate</name>
        <dbReference type="ChEBI" id="CHEBI:58121"/>
    </ligand>
</feature>